<gene>
    <name type="primary">MT-ND5</name>
    <name type="synonym">MTND5</name>
    <name type="synonym">NADH5</name>
    <name type="synonym">ND5</name>
</gene>
<feature type="chain" id="PRO_0000118107" description="NADH-ubiquinone oxidoreductase chain 5">
    <location>
        <begin position="1"/>
        <end position="606"/>
    </location>
</feature>
<feature type="transmembrane region" description="Helical" evidence="3">
    <location>
        <begin position="3"/>
        <end position="23"/>
    </location>
</feature>
<feature type="transmembrane region" description="Helical" evidence="3">
    <location>
        <begin position="38"/>
        <end position="58"/>
    </location>
</feature>
<feature type="transmembrane region" description="Helical" evidence="3">
    <location>
        <begin position="87"/>
        <end position="107"/>
    </location>
</feature>
<feature type="transmembrane region" description="Helical" evidence="3">
    <location>
        <begin position="124"/>
        <end position="144"/>
    </location>
</feature>
<feature type="transmembrane region" description="Helical" evidence="3">
    <location>
        <begin position="180"/>
        <end position="200"/>
    </location>
</feature>
<feature type="transmembrane region" description="Helical" evidence="3">
    <location>
        <begin position="216"/>
        <end position="236"/>
    </location>
</feature>
<feature type="transmembrane region" description="Helical" evidence="3">
    <location>
        <begin position="244"/>
        <end position="264"/>
    </location>
</feature>
<feature type="transmembrane region" description="Helical" evidence="3">
    <location>
        <begin position="276"/>
        <end position="296"/>
    </location>
</feature>
<feature type="transmembrane region" description="Helical" evidence="3">
    <location>
        <begin position="304"/>
        <end position="323"/>
    </location>
</feature>
<feature type="transmembrane region" description="Helical" evidence="3">
    <location>
        <begin position="328"/>
        <end position="350"/>
    </location>
</feature>
<feature type="transmembrane region" description="Helical" evidence="3">
    <location>
        <begin position="369"/>
        <end position="389"/>
    </location>
</feature>
<feature type="transmembrane region" description="Helical" evidence="3">
    <location>
        <begin position="404"/>
        <end position="424"/>
    </location>
</feature>
<feature type="transmembrane region" description="Helical" evidence="3">
    <location>
        <begin position="460"/>
        <end position="480"/>
    </location>
</feature>
<feature type="transmembrane region" description="Helical" evidence="3">
    <location>
        <begin position="483"/>
        <end position="503"/>
    </location>
</feature>
<feature type="transmembrane region" description="Helical" evidence="3">
    <location>
        <begin position="586"/>
        <end position="606"/>
    </location>
</feature>
<feature type="sequence conflict" description="In Ref. 2; ABC17914." evidence="4" ref="2">
    <original>Q</original>
    <variation>H</variation>
    <location>
        <position position="326"/>
    </location>
</feature>
<feature type="sequence conflict" description="In Ref. 2; ABC17914." evidence="4" ref="2">
    <original>V</original>
    <variation>I</variation>
    <location>
        <position position="539"/>
    </location>
</feature>
<feature type="sequence conflict" description="In Ref. 2; ABC17914." evidence="4" ref="2">
    <original>P</original>
    <variation>L</variation>
    <location>
        <position position="543"/>
    </location>
</feature>
<feature type="sequence conflict" description="In Ref. 2; ABC17914." evidence="4" ref="2">
    <original>P</original>
    <variation>L</variation>
    <location>
        <position position="566"/>
    </location>
</feature>
<organism>
    <name type="scientific">Loxodonta africana</name>
    <name type="common">African elephant</name>
    <dbReference type="NCBI Taxonomy" id="9785"/>
    <lineage>
        <taxon>Eukaryota</taxon>
        <taxon>Metazoa</taxon>
        <taxon>Chordata</taxon>
        <taxon>Craniata</taxon>
        <taxon>Vertebrata</taxon>
        <taxon>Euteleostomi</taxon>
        <taxon>Mammalia</taxon>
        <taxon>Eutheria</taxon>
        <taxon>Afrotheria</taxon>
        <taxon>Proboscidea</taxon>
        <taxon>Elephantidae</taxon>
        <taxon>Loxodonta</taxon>
    </lineage>
</organism>
<protein>
    <recommendedName>
        <fullName>NADH-ubiquinone oxidoreductase chain 5</fullName>
        <ecNumber evidence="1">7.1.1.2</ecNumber>
    </recommendedName>
    <alternativeName>
        <fullName>NADH dehydrogenase subunit 5</fullName>
    </alternativeName>
</protein>
<evidence type="ECO:0000250" key="1">
    <source>
        <dbReference type="UniProtKB" id="P03915"/>
    </source>
</evidence>
<evidence type="ECO:0000250" key="2">
    <source>
        <dbReference type="UniProtKB" id="P03920"/>
    </source>
</evidence>
<evidence type="ECO:0000255" key="3"/>
<evidence type="ECO:0000305" key="4"/>
<accession>Q9TA19</accession>
<accession>Q2I3F1</accession>
<comment type="function">
    <text evidence="1">Core subunit of the mitochondrial membrane respiratory chain NADH dehydrogenase (Complex I) which catalyzes electron transfer from NADH through the respiratory chain, using ubiquinone as an electron acceptor. Essential for the catalytic activity and assembly of complex I.</text>
</comment>
<comment type="catalytic activity">
    <reaction evidence="1">
        <text>a ubiquinone + NADH + 5 H(+)(in) = a ubiquinol + NAD(+) + 4 H(+)(out)</text>
        <dbReference type="Rhea" id="RHEA:29091"/>
        <dbReference type="Rhea" id="RHEA-COMP:9565"/>
        <dbReference type="Rhea" id="RHEA-COMP:9566"/>
        <dbReference type="ChEBI" id="CHEBI:15378"/>
        <dbReference type="ChEBI" id="CHEBI:16389"/>
        <dbReference type="ChEBI" id="CHEBI:17976"/>
        <dbReference type="ChEBI" id="CHEBI:57540"/>
        <dbReference type="ChEBI" id="CHEBI:57945"/>
        <dbReference type="EC" id="7.1.1.2"/>
    </reaction>
</comment>
<comment type="subunit">
    <text evidence="2">Core subunit of respiratory chain NADH dehydrogenase (Complex I) which is composed of 45 different subunits.</text>
</comment>
<comment type="subcellular location">
    <subcellularLocation>
        <location evidence="2">Mitochondrion inner membrane</location>
        <topology evidence="3">Multi-pass membrane protein</topology>
    </subcellularLocation>
</comment>
<comment type="similarity">
    <text evidence="4">Belongs to the complex I subunit 5 family.</text>
</comment>
<comment type="sequence caution" evidence="4">
    <conflict type="erroneous initiation">
        <sequence resource="EMBL-CDS" id="ABC17914"/>
    </conflict>
</comment>
<reference key="1">
    <citation type="journal article" date="2000" name="Zoology">
        <title>The complete mitochondrial genome sequence of the African elephant (Loxodonta africana), phylogenetic relationships of Proboscidea to other mammals and D-loop heteroplasmy.</title>
        <authorList>
            <person name="Hauf J."/>
            <person name="Waddell P.J."/>
            <person name="Chalwatzis N."/>
            <person name="Joger U."/>
            <person name="Zimmermann F.K."/>
        </authorList>
    </citation>
    <scope>NUCLEOTIDE SEQUENCE [GENOMIC DNA]</scope>
    <source>
        <tissue>Blood</tissue>
    </source>
</reference>
<reference key="2">
    <citation type="journal article" date="2006" name="PLoS Biol.">
        <title>Complete mitochondrial genome and phylogeny of Pleistocene mammoth Mammuthus primigenius.</title>
        <authorList>
            <person name="Rogaev E.I."/>
            <person name="Moliaka Y.K."/>
            <person name="Malyarchuk B.A."/>
            <person name="Kondrashov F.A."/>
            <person name="Derenko M.V."/>
            <person name="Chumakov I."/>
            <person name="Grigorenko A.P."/>
        </authorList>
    </citation>
    <scope>NUCLEOTIDE SEQUENCE [GENOMIC DNA]</scope>
    <source>
        <tissue>Blood</tissue>
    </source>
</reference>
<name>NU5M_LOXAF</name>
<proteinExistence type="inferred from homology"/>
<dbReference type="EC" id="7.1.1.2" evidence="1"/>
<dbReference type="EMBL" id="AJ224821">
    <property type="protein sequence ID" value="CAA12148.1"/>
    <property type="molecule type" value="Genomic_DNA"/>
</dbReference>
<dbReference type="EMBL" id="DQ316069">
    <property type="protein sequence ID" value="ABC17914.1"/>
    <property type="status" value="ALT_INIT"/>
    <property type="molecule type" value="Genomic_DNA"/>
</dbReference>
<dbReference type="PIR" id="T45560">
    <property type="entry name" value="T45560"/>
</dbReference>
<dbReference type="RefSeq" id="NP_009289.1">
    <property type="nucleotide sequence ID" value="NC_000934.1"/>
</dbReference>
<dbReference type="SMR" id="Q9TA19"/>
<dbReference type="FunCoup" id="Q9TA19">
    <property type="interactions" value="58"/>
</dbReference>
<dbReference type="STRING" id="9785.ENSLAFP00000029501"/>
<dbReference type="Ensembl" id="ENSLAFT00000038066.1">
    <property type="protein sequence ID" value="ENSLAFP00000029501.1"/>
    <property type="gene ID" value="ENSLAFG00000033300.1"/>
</dbReference>
<dbReference type="GeneID" id="808793"/>
<dbReference type="KEGG" id="lav:808793"/>
<dbReference type="CTD" id="4540"/>
<dbReference type="eggNOG" id="KOG4668">
    <property type="taxonomic scope" value="Eukaryota"/>
</dbReference>
<dbReference type="GeneTree" id="ENSGT00730000111303"/>
<dbReference type="HOGENOM" id="CLU_007100_6_0_1"/>
<dbReference type="InParanoid" id="Q9TA19"/>
<dbReference type="OMA" id="GVGIMSF"/>
<dbReference type="OrthoDB" id="10069788at2759"/>
<dbReference type="TreeFam" id="TF342974"/>
<dbReference type="Proteomes" id="UP000007646">
    <property type="component" value="Unassembled WGS sequence"/>
</dbReference>
<dbReference type="GO" id="GO:0005743">
    <property type="term" value="C:mitochondrial inner membrane"/>
    <property type="evidence" value="ECO:0000250"/>
    <property type="project" value="UniProtKB"/>
</dbReference>
<dbReference type="GO" id="GO:0045271">
    <property type="term" value="C:respiratory chain complex I"/>
    <property type="evidence" value="ECO:0007669"/>
    <property type="project" value="Ensembl"/>
</dbReference>
<dbReference type="GO" id="GO:0008137">
    <property type="term" value="F:NADH dehydrogenase (ubiquinone) activity"/>
    <property type="evidence" value="ECO:0000250"/>
    <property type="project" value="UniProtKB"/>
</dbReference>
<dbReference type="GO" id="GO:0015990">
    <property type="term" value="P:electron transport coupled proton transport"/>
    <property type="evidence" value="ECO:0007669"/>
    <property type="project" value="TreeGrafter"/>
</dbReference>
<dbReference type="GO" id="GO:0006120">
    <property type="term" value="P:mitochondrial electron transport, NADH to ubiquinone"/>
    <property type="evidence" value="ECO:0000250"/>
    <property type="project" value="UniProtKB"/>
</dbReference>
<dbReference type="GO" id="GO:0032981">
    <property type="term" value="P:mitochondrial respiratory chain complex I assembly"/>
    <property type="evidence" value="ECO:0000250"/>
    <property type="project" value="UniProtKB"/>
</dbReference>
<dbReference type="InterPro" id="IPR010934">
    <property type="entry name" value="NADH_DH_su5_C"/>
</dbReference>
<dbReference type="InterPro" id="IPR018393">
    <property type="entry name" value="NADHpl_OxRdtase_5_subgr"/>
</dbReference>
<dbReference type="InterPro" id="IPR001750">
    <property type="entry name" value="ND/Mrp_TM"/>
</dbReference>
<dbReference type="InterPro" id="IPR003945">
    <property type="entry name" value="NU5C-like"/>
</dbReference>
<dbReference type="InterPro" id="IPR001516">
    <property type="entry name" value="Proton_antipo_N"/>
</dbReference>
<dbReference type="NCBIfam" id="TIGR01974">
    <property type="entry name" value="NDH_I_L"/>
    <property type="match status" value="1"/>
</dbReference>
<dbReference type="PANTHER" id="PTHR42829">
    <property type="entry name" value="NADH-UBIQUINONE OXIDOREDUCTASE CHAIN 5"/>
    <property type="match status" value="1"/>
</dbReference>
<dbReference type="PANTHER" id="PTHR42829:SF2">
    <property type="entry name" value="NADH-UBIQUINONE OXIDOREDUCTASE CHAIN 5"/>
    <property type="match status" value="1"/>
</dbReference>
<dbReference type="Pfam" id="PF06455">
    <property type="entry name" value="NADH5_C"/>
    <property type="match status" value="1"/>
</dbReference>
<dbReference type="Pfam" id="PF00361">
    <property type="entry name" value="Proton_antipo_M"/>
    <property type="match status" value="1"/>
</dbReference>
<dbReference type="Pfam" id="PF00662">
    <property type="entry name" value="Proton_antipo_N"/>
    <property type="match status" value="1"/>
</dbReference>
<dbReference type="PRINTS" id="PR01434">
    <property type="entry name" value="NADHDHGNASE5"/>
</dbReference>
<geneLocation type="mitochondrion"/>
<keyword id="KW-0249">Electron transport</keyword>
<keyword id="KW-0472">Membrane</keyword>
<keyword id="KW-0496">Mitochondrion</keyword>
<keyword id="KW-0999">Mitochondrion inner membrane</keyword>
<keyword id="KW-0520">NAD</keyword>
<keyword id="KW-1185">Reference proteome</keyword>
<keyword id="KW-0679">Respiratory chain</keyword>
<keyword id="KW-1278">Translocase</keyword>
<keyword id="KW-0812">Transmembrane</keyword>
<keyword id="KW-1133">Transmembrane helix</keyword>
<keyword id="KW-0813">Transport</keyword>
<keyword id="KW-0830">Ubiquinone</keyword>
<sequence>MKVINLIPTLMLTSLIILTLPIITTLLQNNKTNCFLYITKTAVTYAFAISLIPTLLFIQSNQEAYISNWHWMTIHTLKLSMSFKLDFFSLTFMPIALFITWSIMEFSLWYMHSDPHINRFFKYLLLFLITMLILVSANNLLQLFMGWEGVGIMSFLLISWWHGRTDANTAALQAMLYNRIGDMGFIMMMAWFTIHLNSWEFQQIFLTNPKNTTLPLLGLLLASAGKSAQFGLHPWLPSAMEGPTPVSALLHSSTMVMAGVFTLIRFYPLMENNLTIQTSTLCLGAITTLFTAICALTQNDIKKIIALSTSSQLGLMMVTIGINQPQLAFIHMCTHAFFKAMLFLSSGSIIHNLNNEQDIRKMGGLYKTMPITSTAIIIGSLALTGMPFLTGFYSKDPIIETANMSYINTWALLITLIAVSMTASYSTRIIFFALLGQPRYPPLTQVNENNPYLVNPIKRLILGSIFMGFLISMNTIPHTTPQMTMPPHLKFMALAVTLLGFTVATELNNMTHNLMFKQPSRMHTFSTMLGYYPTTTHRVLPYPSLTMSQNLATTIMDSIWLEKMIPKNLTTMQKTAASLVSNQKGLMKLYFLSFLLSITLGLLIAL</sequence>